<gene>
    <name type="ORF">SPAC4G9.19</name>
</gene>
<accession>Q10247</accession>
<keyword id="KW-0143">Chaperone</keyword>
<keyword id="KW-1185">Reference proteome</keyword>
<protein>
    <recommendedName>
        <fullName>Uncharacterized J domain-containing protein C4G9.19</fullName>
    </recommendedName>
</protein>
<reference key="1">
    <citation type="journal article" date="2002" name="Nature">
        <title>The genome sequence of Schizosaccharomyces pombe.</title>
        <authorList>
            <person name="Wood V."/>
            <person name="Gwilliam R."/>
            <person name="Rajandream M.A."/>
            <person name="Lyne M.H."/>
            <person name="Lyne R."/>
            <person name="Stewart A."/>
            <person name="Sgouros J.G."/>
            <person name="Peat N."/>
            <person name="Hayles J."/>
            <person name="Baker S.G."/>
            <person name="Basham D."/>
            <person name="Bowman S."/>
            <person name="Brooks K."/>
            <person name="Brown D."/>
            <person name="Brown S."/>
            <person name="Chillingworth T."/>
            <person name="Churcher C.M."/>
            <person name="Collins M."/>
            <person name="Connor R."/>
            <person name="Cronin A."/>
            <person name="Davis P."/>
            <person name="Feltwell T."/>
            <person name="Fraser A."/>
            <person name="Gentles S."/>
            <person name="Goble A."/>
            <person name="Hamlin N."/>
            <person name="Harris D.E."/>
            <person name="Hidalgo J."/>
            <person name="Hodgson G."/>
            <person name="Holroyd S."/>
            <person name="Hornsby T."/>
            <person name="Howarth S."/>
            <person name="Huckle E.J."/>
            <person name="Hunt S."/>
            <person name="Jagels K."/>
            <person name="James K.D."/>
            <person name="Jones L."/>
            <person name="Jones M."/>
            <person name="Leather S."/>
            <person name="McDonald S."/>
            <person name="McLean J."/>
            <person name="Mooney P."/>
            <person name="Moule S."/>
            <person name="Mungall K.L."/>
            <person name="Murphy L.D."/>
            <person name="Niblett D."/>
            <person name="Odell C."/>
            <person name="Oliver K."/>
            <person name="O'Neil S."/>
            <person name="Pearson D."/>
            <person name="Quail M.A."/>
            <person name="Rabbinowitsch E."/>
            <person name="Rutherford K.M."/>
            <person name="Rutter S."/>
            <person name="Saunders D."/>
            <person name="Seeger K."/>
            <person name="Sharp S."/>
            <person name="Skelton J."/>
            <person name="Simmonds M.N."/>
            <person name="Squares R."/>
            <person name="Squares S."/>
            <person name="Stevens K."/>
            <person name="Taylor K."/>
            <person name="Taylor R.G."/>
            <person name="Tivey A."/>
            <person name="Walsh S.V."/>
            <person name="Warren T."/>
            <person name="Whitehead S."/>
            <person name="Woodward J.R."/>
            <person name="Volckaert G."/>
            <person name="Aert R."/>
            <person name="Robben J."/>
            <person name="Grymonprez B."/>
            <person name="Weltjens I."/>
            <person name="Vanstreels E."/>
            <person name="Rieger M."/>
            <person name="Schaefer M."/>
            <person name="Mueller-Auer S."/>
            <person name="Gabel C."/>
            <person name="Fuchs M."/>
            <person name="Duesterhoeft A."/>
            <person name="Fritzc C."/>
            <person name="Holzer E."/>
            <person name="Moestl D."/>
            <person name="Hilbert H."/>
            <person name="Borzym K."/>
            <person name="Langer I."/>
            <person name="Beck A."/>
            <person name="Lehrach H."/>
            <person name="Reinhardt R."/>
            <person name="Pohl T.M."/>
            <person name="Eger P."/>
            <person name="Zimmermann W."/>
            <person name="Wedler H."/>
            <person name="Wambutt R."/>
            <person name="Purnelle B."/>
            <person name="Goffeau A."/>
            <person name="Cadieu E."/>
            <person name="Dreano S."/>
            <person name="Gloux S."/>
            <person name="Lelaure V."/>
            <person name="Mottier S."/>
            <person name="Galibert F."/>
            <person name="Aves S.J."/>
            <person name="Xiang Z."/>
            <person name="Hunt C."/>
            <person name="Moore K."/>
            <person name="Hurst S.M."/>
            <person name="Lucas M."/>
            <person name="Rochet M."/>
            <person name="Gaillardin C."/>
            <person name="Tallada V.A."/>
            <person name="Garzon A."/>
            <person name="Thode G."/>
            <person name="Daga R.R."/>
            <person name="Cruzado L."/>
            <person name="Jimenez J."/>
            <person name="Sanchez M."/>
            <person name="del Rey F."/>
            <person name="Benito J."/>
            <person name="Dominguez A."/>
            <person name="Revuelta J.L."/>
            <person name="Moreno S."/>
            <person name="Armstrong J."/>
            <person name="Forsburg S.L."/>
            <person name="Cerutti L."/>
            <person name="Lowe T."/>
            <person name="McCombie W.R."/>
            <person name="Paulsen I."/>
            <person name="Potashkin J."/>
            <person name="Shpakovski G.V."/>
            <person name="Ussery D."/>
            <person name="Barrell B.G."/>
            <person name="Nurse P."/>
        </authorList>
    </citation>
    <scope>NUCLEOTIDE SEQUENCE [LARGE SCALE GENOMIC DNA]</scope>
    <source>
        <strain>972 / ATCC 24843</strain>
    </source>
</reference>
<dbReference type="EMBL" id="CU329670">
    <property type="protein sequence ID" value="CAA93569.1"/>
    <property type="molecule type" value="Genomic_DNA"/>
</dbReference>
<dbReference type="PIR" id="T38878">
    <property type="entry name" value="T38878"/>
</dbReference>
<dbReference type="RefSeq" id="NP_593700.1">
    <property type="nucleotide sequence ID" value="NM_001019132.2"/>
</dbReference>
<dbReference type="SMR" id="Q10247"/>
<dbReference type="BioGRID" id="279929">
    <property type="interactions" value="10"/>
</dbReference>
<dbReference type="FunCoup" id="Q10247">
    <property type="interactions" value="27"/>
</dbReference>
<dbReference type="STRING" id="284812.Q10247"/>
<dbReference type="PaxDb" id="4896-SPAC4G9.19.1"/>
<dbReference type="EnsemblFungi" id="SPAC4G9.19.1">
    <property type="protein sequence ID" value="SPAC4G9.19.1:pep"/>
    <property type="gene ID" value="SPAC4G9.19"/>
</dbReference>
<dbReference type="KEGG" id="spo:2543511"/>
<dbReference type="PomBase" id="SPAC4G9.19"/>
<dbReference type="VEuPathDB" id="FungiDB:SPAC4G9.19"/>
<dbReference type="eggNOG" id="KOG0714">
    <property type="taxonomic scope" value="Eukaryota"/>
</dbReference>
<dbReference type="HOGENOM" id="CLU_990980_0_0_1"/>
<dbReference type="InParanoid" id="Q10247"/>
<dbReference type="OMA" id="ANPRYPM"/>
<dbReference type="PhylomeDB" id="Q10247"/>
<dbReference type="PRO" id="PR:Q10247"/>
<dbReference type="Proteomes" id="UP000002485">
    <property type="component" value="Chromosome I"/>
</dbReference>
<dbReference type="GO" id="GO:0030544">
    <property type="term" value="F:Hsp70 protein binding"/>
    <property type="evidence" value="ECO:0000255"/>
    <property type="project" value="PomBase"/>
</dbReference>
<dbReference type="GO" id="GO:0036503">
    <property type="term" value="P:ERAD pathway"/>
    <property type="evidence" value="ECO:0000266"/>
    <property type="project" value="PomBase"/>
</dbReference>
<dbReference type="CDD" id="cd06257">
    <property type="entry name" value="DnaJ"/>
    <property type="match status" value="1"/>
</dbReference>
<dbReference type="Gene3D" id="1.10.287.110">
    <property type="entry name" value="DnaJ domain"/>
    <property type="match status" value="1"/>
</dbReference>
<dbReference type="InterPro" id="IPR050817">
    <property type="entry name" value="DjlA_DnaK_co-chaperone"/>
</dbReference>
<dbReference type="InterPro" id="IPR001623">
    <property type="entry name" value="DnaJ_domain"/>
</dbReference>
<dbReference type="InterPro" id="IPR018253">
    <property type="entry name" value="DnaJ_domain_CS"/>
</dbReference>
<dbReference type="InterPro" id="IPR036869">
    <property type="entry name" value="J_dom_sf"/>
</dbReference>
<dbReference type="PANTHER" id="PTHR24074">
    <property type="entry name" value="CO-CHAPERONE PROTEIN DJLA"/>
    <property type="match status" value="1"/>
</dbReference>
<dbReference type="Pfam" id="PF00226">
    <property type="entry name" value="DnaJ"/>
    <property type="match status" value="1"/>
</dbReference>
<dbReference type="PRINTS" id="PR00625">
    <property type="entry name" value="JDOMAIN"/>
</dbReference>
<dbReference type="SMART" id="SM00271">
    <property type="entry name" value="DnaJ"/>
    <property type="match status" value="1"/>
</dbReference>
<dbReference type="SUPFAM" id="SSF46565">
    <property type="entry name" value="Chaperone J-domain"/>
    <property type="match status" value="1"/>
</dbReference>
<dbReference type="PROSITE" id="PS00636">
    <property type="entry name" value="DNAJ_1"/>
    <property type="match status" value="1"/>
</dbReference>
<dbReference type="PROSITE" id="PS50076">
    <property type="entry name" value="DNAJ_2"/>
    <property type="match status" value="1"/>
</dbReference>
<evidence type="ECO:0000255" key="1">
    <source>
        <dbReference type="PROSITE-ProRule" id="PRU00286"/>
    </source>
</evidence>
<evidence type="ECO:0000256" key="2">
    <source>
        <dbReference type="SAM" id="MobiDB-lite"/>
    </source>
</evidence>
<name>YD1J_SCHPO</name>
<organism>
    <name type="scientific">Schizosaccharomyces pombe (strain 972 / ATCC 24843)</name>
    <name type="common">Fission yeast</name>
    <dbReference type="NCBI Taxonomy" id="284812"/>
    <lineage>
        <taxon>Eukaryota</taxon>
        <taxon>Fungi</taxon>
        <taxon>Dikarya</taxon>
        <taxon>Ascomycota</taxon>
        <taxon>Taphrinomycotina</taxon>
        <taxon>Schizosaccharomycetes</taxon>
        <taxon>Schizosaccharomycetales</taxon>
        <taxon>Schizosaccharomycetaceae</taxon>
        <taxon>Schizosaccharomyces</taxon>
    </lineage>
</organism>
<sequence>MSKIFFRLNLVRNSLWRRAASFTSYSELKSLTPYEILELPRTCTANDIKRKYIELVKKHHPDKMKNASQLAPTESPPEINKHNEEYFRLLLAANALLSDKRRREEYDRFGIHWNQPSHPTHPSPQNWSQARYPTYSRSRRSAGMGSWEEYYYNSYDYMNDQNASNKNRKFDDEGMLVFAGILSILVIINIYSNYRNGKFYREARSAAIGRAEDNFDYYSTGMADLSKDDRISRFLILREQSKQIPTQQKPSSLPPPERALPAPTMPTPSS</sequence>
<proteinExistence type="predicted"/>
<feature type="chain" id="PRO_0000071157" description="Uncharacterized J domain-containing protein C4G9.19">
    <location>
        <begin position="1"/>
        <end position="270"/>
    </location>
</feature>
<feature type="domain" description="J" evidence="1">
    <location>
        <begin position="43"/>
        <end position="112"/>
    </location>
</feature>
<feature type="region of interest" description="Disordered" evidence="2">
    <location>
        <begin position="239"/>
        <end position="270"/>
    </location>
</feature>
<feature type="compositionally biased region" description="Polar residues" evidence="2">
    <location>
        <begin position="242"/>
        <end position="251"/>
    </location>
</feature>
<feature type="compositionally biased region" description="Pro residues" evidence="2">
    <location>
        <begin position="252"/>
        <end position="270"/>
    </location>
</feature>